<keyword id="KW-0025">Alternative splicing</keyword>
<keyword id="KW-1003">Cell membrane</keyword>
<keyword id="KW-0472">Membrane</keyword>
<keyword id="KW-0597">Phosphoprotein</keyword>
<keyword id="KW-1185">Reference proteome</keyword>
<keyword id="KW-0807">Transducer</keyword>
<keyword id="KW-0833">Ubl conjugation pathway</keyword>
<protein>
    <recommendedName>
        <fullName>Root phototropism protein 3</fullName>
    </recommendedName>
    <alternativeName>
        <fullName>BTB/POZ domain-containing protein RPT3</fullName>
    </alternativeName>
    <alternativeName>
        <fullName>Non-phototropic hypocotyl protein 3</fullName>
    </alternativeName>
</protein>
<feature type="chain" id="PRO_0000097439" description="Root phototropism protein 3">
    <location>
        <begin position="1"/>
        <end position="746"/>
    </location>
</feature>
<feature type="domain" description="BTB" evidence="2">
    <location>
        <begin position="54"/>
        <end position="122"/>
    </location>
</feature>
<feature type="domain" description="NPH3" evidence="3">
    <location>
        <begin position="250"/>
        <end position="605"/>
    </location>
</feature>
<feature type="region of interest" description="Disordered" evidence="4">
    <location>
        <begin position="1"/>
        <end position="24"/>
    </location>
</feature>
<feature type="region of interest" description="Disordered" evidence="4">
    <location>
        <begin position="461"/>
        <end position="500"/>
    </location>
</feature>
<feature type="region of interest" description="Disordered" evidence="4">
    <location>
        <begin position="708"/>
        <end position="746"/>
    </location>
</feature>
<feature type="compositionally biased region" description="Gly residues" evidence="4">
    <location>
        <begin position="9"/>
        <end position="19"/>
    </location>
</feature>
<feature type="compositionally biased region" description="Low complexity" evidence="4">
    <location>
        <begin position="466"/>
        <end position="478"/>
    </location>
</feature>
<feature type="compositionally biased region" description="Basic residues" evidence="4">
    <location>
        <begin position="735"/>
        <end position="746"/>
    </location>
</feature>
<feature type="modified residue" description="Phosphotyrosine" evidence="5">
    <location>
        <position position="546"/>
    </location>
</feature>
<feature type="splice variant" id="VSP_041384" description="In isoform 2." evidence="12">
    <original>AHPT</original>
    <variation>VYIY</variation>
    <location>
        <begin position="555"/>
        <end position="558"/>
    </location>
</feature>
<feature type="splice variant" id="VSP_041385" description="In isoform 2." evidence="12">
    <location>
        <begin position="559"/>
        <end position="746"/>
    </location>
</feature>
<feature type="mutagenesis site" description="In nph3-2; loss of hypocotyl phototropism." evidence="5">
    <location>
        <position position="546"/>
    </location>
</feature>
<feature type="sequence conflict" description="In Ref. 4; BAE99857." evidence="13" ref="4">
    <original>D</original>
    <variation>V</variation>
    <location>
        <position position="519"/>
    </location>
</feature>
<accession>Q9FMF5</accession>
<accession>F4KDL6</accession>
<accession>F4KDL7</accession>
<accession>Q0WSP1</accession>
<accession>Q9SPB4</accession>
<dbReference type="EMBL" id="AF180390">
    <property type="protein sequence ID" value="AAF05914.1"/>
    <property type="molecule type" value="mRNA"/>
</dbReference>
<dbReference type="EMBL" id="AB008268">
    <property type="protein sequence ID" value="BAB09864.1"/>
    <property type="status" value="ALT_SEQ"/>
    <property type="molecule type" value="Genomic_DNA"/>
</dbReference>
<dbReference type="EMBL" id="CP002688">
    <property type="protein sequence ID" value="AED97870.1"/>
    <property type="molecule type" value="Genomic_DNA"/>
</dbReference>
<dbReference type="EMBL" id="AK227884">
    <property type="protein sequence ID" value="BAE99857.1"/>
    <property type="molecule type" value="mRNA"/>
</dbReference>
<dbReference type="RefSeq" id="NP_568989.1">
    <molecule id="Q9FMF5-1"/>
    <property type="nucleotide sequence ID" value="NM_125829.4"/>
</dbReference>
<dbReference type="SMR" id="Q9FMF5"/>
<dbReference type="BioGRID" id="21796">
    <property type="interactions" value="6"/>
</dbReference>
<dbReference type="DIP" id="DIP-61198N"/>
<dbReference type="FunCoup" id="Q9FMF5">
    <property type="interactions" value="273"/>
</dbReference>
<dbReference type="IntAct" id="Q9FMF5">
    <property type="interactions" value="2"/>
</dbReference>
<dbReference type="STRING" id="3702.Q9FMF5"/>
<dbReference type="iPTMnet" id="Q9FMF5"/>
<dbReference type="PaxDb" id="3702-AT5G64330.1"/>
<dbReference type="ProteomicsDB" id="228224">
    <molecule id="Q9FMF5-1"/>
</dbReference>
<dbReference type="EnsemblPlants" id="AT5G64330.1">
    <molecule id="Q9FMF5-1"/>
    <property type="protein sequence ID" value="AT5G64330.1"/>
    <property type="gene ID" value="AT5G64330"/>
</dbReference>
<dbReference type="GeneID" id="836554"/>
<dbReference type="Gramene" id="AT5G64330.1">
    <molecule id="Q9FMF5-1"/>
    <property type="protein sequence ID" value="AT5G64330.1"/>
    <property type="gene ID" value="AT5G64330"/>
</dbReference>
<dbReference type="KEGG" id="ath:AT5G64330"/>
<dbReference type="Araport" id="AT5G64330"/>
<dbReference type="TAIR" id="AT5G64330">
    <property type="gene designation" value="NPH3"/>
</dbReference>
<dbReference type="eggNOG" id="ENOG502QR3H">
    <property type="taxonomic scope" value="Eukaryota"/>
</dbReference>
<dbReference type="HOGENOM" id="CLU_005994_6_2_1"/>
<dbReference type="InParanoid" id="Q9FMF5"/>
<dbReference type="UniPathway" id="UPA00143"/>
<dbReference type="PRO" id="PR:Q9FMF5"/>
<dbReference type="Proteomes" id="UP000006548">
    <property type="component" value="Chromosome 5"/>
</dbReference>
<dbReference type="ExpressionAtlas" id="Q9FMF5">
    <property type="expression patterns" value="baseline and differential"/>
</dbReference>
<dbReference type="GO" id="GO:0005886">
    <property type="term" value="C:plasma membrane"/>
    <property type="evidence" value="ECO:0007669"/>
    <property type="project" value="UniProtKB-SubCell"/>
</dbReference>
<dbReference type="GO" id="GO:0009785">
    <property type="term" value="P:blue light signaling pathway"/>
    <property type="evidence" value="ECO:0000353"/>
    <property type="project" value="TAIR"/>
</dbReference>
<dbReference type="GO" id="GO:0009638">
    <property type="term" value="P:phototropism"/>
    <property type="evidence" value="ECO:0000315"/>
    <property type="project" value="TAIR"/>
</dbReference>
<dbReference type="GO" id="GO:0016567">
    <property type="term" value="P:protein ubiquitination"/>
    <property type="evidence" value="ECO:0000315"/>
    <property type="project" value="TAIR"/>
</dbReference>
<dbReference type="CDD" id="cd18312">
    <property type="entry name" value="BTB_POZ_NPY3-like"/>
    <property type="match status" value="1"/>
</dbReference>
<dbReference type="Gene3D" id="3.30.710.10">
    <property type="entry name" value="Potassium Channel Kv1.1, Chain A"/>
    <property type="match status" value="1"/>
</dbReference>
<dbReference type="InterPro" id="IPR000210">
    <property type="entry name" value="BTB/POZ_dom"/>
</dbReference>
<dbReference type="InterPro" id="IPR043454">
    <property type="entry name" value="NPH3/RPT2-like"/>
</dbReference>
<dbReference type="InterPro" id="IPR027356">
    <property type="entry name" value="NPH3_dom"/>
</dbReference>
<dbReference type="InterPro" id="IPR011333">
    <property type="entry name" value="SKP1/BTB/POZ_sf"/>
</dbReference>
<dbReference type="PANTHER" id="PTHR32370">
    <property type="entry name" value="OS12G0117600 PROTEIN"/>
    <property type="match status" value="1"/>
</dbReference>
<dbReference type="Pfam" id="PF03000">
    <property type="entry name" value="NPH3"/>
    <property type="match status" value="1"/>
</dbReference>
<dbReference type="SUPFAM" id="SSF54695">
    <property type="entry name" value="POZ domain"/>
    <property type="match status" value="1"/>
</dbReference>
<dbReference type="PROSITE" id="PS50097">
    <property type="entry name" value="BTB"/>
    <property type="match status" value="1"/>
</dbReference>
<dbReference type="PROSITE" id="PS51649">
    <property type="entry name" value="NPH3"/>
    <property type="match status" value="1"/>
</dbReference>
<name>RPT3_ARATH</name>
<organism>
    <name type="scientific">Arabidopsis thaliana</name>
    <name type="common">Mouse-ear cress</name>
    <dbReference type="NCBI Taxonomy" id="3702"/>
    <lineage>
        <taxon>Eukaryota</taxon>
        <taxon>Viridiplantae</taxon>
        <taxon>Streptophyta</taxon>
        <taxon>Embryophyta</taxon>
        <taxon>Tracheophyta</taxon>
        <taxon>Spermatophyta</taxon>
        <taxon>Magnoliopsida</taxon>
        <taxon>eudicotyledons</taxon>
        <taxon>Gunneridae</taxon>
        <taxon>Pentapetalae</taxon>
        <taxon>rosids</taxon>
        <taxon>malvids</taxon>
        <taxon>Brassicales</taxon>
        <taxon>Brassicaceae</taxon>
        <taxon>Camelineae</taxon>
        <taxon>Arabidopsis</taxon>
    </lineage>
</organism>
<reference key="1">
    <citation type="journal article" date="1999" name="Science">
        <title>Arabidopsis NPH3: a NPH1 photoreceptor-interacting protein essential for phototropism.</title>
        <authorList>
            <person name="Motchoulski A."/>
            <person name="Liscum E."/>
        </authorList>
    </citation>
    <scope>NUCLEOTIDE SEQUENCE [MRNA] (ISOFORM 1)</scope>
    <scope>FUNCTION</scope>
    <scope>SUBCELLULAR LOCATION</scope>
    <scope>INTERACTION WITH PHOT1</scope>
    <scope>PHOSPHORYLATION AT TYR-546</scope>
    <scope>MUTAGENESIS OF TYR-546</scope>
    <source>
        <strain>cv. Columbia</strain>
    </source>
</reference>
<reference key="2">
    <citation type="journal article" date="1997" name="DNA Res.">
        <title>Structural analysis of Arabidopsis thaliana chromosome 5. III. Sequence features of the regions of 1,191,918 bp covered by seventeen physically assigned P1 clones.</title>
        <authorList>
            <person name="Nakamura Y."/>
            <person name="Sato S."/>
            <person name="Kaneko T."/>
            <person name="Kotani H."/>
            <person name="Asamizu E."/>
            <person name="Miyajima N."/>
            <person name="Tabata S."/>
        </authorList>
    </citation>
    <scope>NUCLEOTIDE SEQUENCE [LARGE SCALE GENOMIC DNA]</scope>
    <source>
        <strain>cv. Columbia</strain>
    </source>
</reference>
<reference key="3">
    <citation type="journal article" date="2017" name="Plant J.">
        <title>Araport11: a complete reannotation of the Arabidopsis thaliana reference genome.</title>
        <authorList>
            <person name="Cheng C.Y."/>
            <person name="Krishnakumar V."/>
            <person name="Chan A.P."/>
            <person name="Thibaud-Nissen F."/>
            <person name="Schobel S."/>
            <person name="Town C.D."/>
        </authorList>
    </citation>
    <scope>GENOME REANNOTATION</scope>
    <source>
        <strain>cv. Columbia</strain>
    </source>
</reference>
<reference key="4">
    <citation type="submission" date="2006-07" db="EMBL/GenBank/DDBJ databases">
        <title>Large-scale analysis of RIKEN Arabidopsis full-length (RAFL) cDNAs.</title>
        <authorList>
            <person name="Totoki Y."/>
            <person name="Seki M."/>
            <person name="Ishida J."/>
            <person name="Nakajima M."/>
            <person name="Enju A."/>
            <person name="Kamiya A."/>
            <person name="Narusaka M."/>
            <person name="Shin-i T."/>
            <person name="Nakagawa M."/>
            <person name="Sakamoto N."/>
            <person name="Oishi K."/>
            <person name="Kohara Y."/>
            <person name="Kobayashi M."/>
            <person name="Toyoda A."/>
            <person name="Sakaki Y."/>
            <person name="Sakurai T."/>
            <person name="Iida K."/>
            <person name="Akiyama K."/>
            <person name="Satou M."/>
            <person name="Toyoda T."/>
            <person name="Konagaya A."/>
            <person name="Carninci P."/>
            <person name="Kawai J."/>
            <person name="Hayashizaki Y."/>
            <person name="Shinozaki K."/>
        </authorList>
    </citation>
    <scope>NUCLEOTIDE SEQUENCE [LARGE SCALE MRNA] (ISOFORM 2)</scope>
    <source>
        <strain>cv. Columbia</strain>
    </source>
</reference>
<reference key="5">
    <citation type="journal article" date="1992" name="Proc. Natl. Acad. Sci. U.S.A.">
        <title>Light-induced phosphorylation of a membrane protein plays an early role in signal transduction for phototropism in Arabidopsis thaliana.</title>
        <authorList>
            <person name="Reymond P."/>
            <person name="Short T.W."/>
            <person name="Briggs W.R."/>
            <person name="Poff K.L."/>
        </authorList>
    </citation>
    <scope>PHOSPHORYLATION</scope>
</reference>
<reference key="6">
    <citation type="journal article" date="2000" name="Plant Cell">
        <title>RPT2: a signal transducer of the phototropic response in Arabidopsis.</title>
        <authorList>
            <person name="Sakai T."/>
            <person name="Wada T."/>
            <person name="Ishiguro S."/>
            <person name="Okada K."/>
        </authorList>
    </citation>
    <scope>FUNCTION</scope>
</reference>
<reference key="7">
    <citation type="journal article" date="2004" name="Plant Cell">
        <title>RPT2 is a signal transducer involved in phototropic response and stomatal opening by association with phototropin 1 in Arabidopsis thaliana.</title>
        <authorList>
            <person name="Inada S."/>
            <person name="Ohgishi M."/>
            <person name="Mayama T."/>
            <person name="Okada K."/>
            <person name="Sakai T."/>
        </authorList>
    </citation>
    <scope>FUNCTION</scope>
    <scope>TISSUE SPECIFICITY</scope>
    <scope>INTERACTION WITH RPT2</scope>
</reference>
<reference key="8">
    <citation type="journal article" date="2005" name="J. Biol. Chem.">
        <title>Cullins 3a and 3b assemble with members of the broad complex/tramtrack/bric-a-brac (BTB) protein family to form essential ubiquitin-protein ligases (E3s) in Arabidopsis.</title>
        <authorList>
            <person name="Gingerich D.J."/>
            <person name="Gagne J.M."/>
            <person name="Salter D.W."/>
            <person name="Hellmann H."/>
            <person name="Estelle M."/>
            <person name="Ma L."/>
            <person name="Vierstra R.D."/>
        </authorList>
    </citation>
    <scope>DOMAIN BTB</scope>
</reference>
<reference key="9">
    <citation type="journal article" date="2006" name="J. Exp. Bot.">
        <title>Gene profiling of the red light signalling pathways in roots.</title>
        <authorList>
            <person name="Molas M.L."/>
            <person name="Kiss J.Z."/>
            <person name="Correll M.J."/>
        </authorList>
    </citation>
    <scope>INDUCTION</scope>
</reference>
<reference key="10">
    <citation type="journal article" date="2006" name="Proc. Natl. Acad. Sci. U.S.A.">
        <title>PHYTOCHROME KINASE SUBSTRATE 1 is a phototropin 1 binding protein required for phototropism.</title>
        <authorList>
            <person name="Lariguet P."/>
            <person name="Schepens I."/>
            <person name="Hodgson D."/>
            <person name="Pedmale U.V."/>
            <person name="Trevisan M."/>
            <person name="Kami C."/>
            <person name="de Carbonnel M."/>
            <person name="Alonso J.M."/>
            <person name="Ecker J.R."/>
            <person name="Liscum E."/>
            <person name="Fankhauser C."/>
        </authorList>
    </citation>
    <scope>FUNCTION</scope>
    <scope>INTERACTION WITH PKS1 AND PHOT1</scope>
    <scope>SUBCELLULAR LOCATION</scope>
</reference>
<reference key="11">
    <citation type="journal article" date="2009" name="J. Proteomics">
        <title>Phosphoproteomic analysis of nuclei-enriched fractions from Arabidopsis thaliana.</title>
        <authorList>
            <person name="Jones A.M.E."/>
            <person name="MacLean D."/>
            <person name="Studholme D.J."/>
            <person name="Serna-Sanz A."/>
            <person name="Andreasson E."/>
            <person name="Rathjen J.P."/>
            <person name="Peck S.C."/>
        </authorList>
    </citation>
    <scope>IDENTIFICATION BY MASS SPECTROMETRY [LARGE SCALE ANALYSIS]</scope>
    <source>
        <strain>cv. Columbia</strain>
    </source>
</reference>
<reference key="12">
    <citation type="journal article" date="2009" name="Plant Physiol.">
        <title>Large-scale Arabidopsis phosphoproteome profiling reveals novel chloroplast kinase substrates and phosphorylation networks.</title>
        <authorList>
            <person name="Reiland S."/>
            <person name="Messerli G."/>
            <person name="Baerenfaller K."/>
            <person name="Gerrits B."/>
            <person name="Endler A."/>
            <person name="Grossmann J."/>
            <person name="Gruissem W."/>
            <person name="Baginsky S."/>
        </authorList>
    </citation>
    <scope>IDENTIFICATION BY MASS SPECTROMETRY [LARGE SCALE ANALYSIS]</scope>
</reference>
<reference key="13">
    <citation type="journal article" date="2010" name="Plant Physiol.">
        <title>The Arabidopsis PHYTOCHROME KINASE SUBSTRATE2 protein is a phototropin signaling element that regulates leaf flattening and leaf positioning.</title>
        <authorList>
            <person name="de Carbonnel M."/>
            <person name="Davis P."/>
            <person name="Roelfsema M.R."/>
            <person name="Inoue S."/>
            <person name="Schepens I."/>
            <person name="Lariguet P."/>
            <person name="Geisler M."/>
            <person name="Shimazaki K."/>
            <person name="Hangarter R."/>
            <person name="Fankhauser C."/>
        </authorList>
    </citation>
    <scope>FUNCTION</scope>
    <scope>INTERACTION WITH PKS1; PKS2; PHOT1 AND PHOT2</scope>
    <scope>DISRUPTION PHENOTYPE</scope>
</reference>
<reference key="14">
    <citation type="journal article" date="2011" name="Plant Physiol.">
        <title>A negative effector of blue light-induced and gravitropic bending in Arabidopsis.</title>
        <authorList>
            <person name="Knauer T."/>
            <person name="Duemmer M."/>
            <person name="Landgraf F."/>
            <person name="Forreiter C."/>
        </authorList>
    </citation>
    <scope>FUNCTION</scope>
    <scope>INTERACTION WITH CAR6 AND PHOT1</scope>
</reference>
<evidence type="ECO:0000250" key="1"/>
<evidence type="ECO:0000255" key="2">
    <source>
        <dbReference type="PROSITE-ProRule" id="PRU00037"/>
    </source>
</evidence>
<evidence type="ECO:0000255" key="3">
    <source>
        <dbReference type="PROSITE-ProRule" id="PRU00982"/>
    </source>
</evidence>
<evidence type="ECO:0000256" key="4">
    <source>
        <dbReference type="SAM" id="MobiDB-lite"/>
    </source>
</evidence>
<evidence type="ECO:0000269" key="5">
    <source>
    </source>
</evidence>
<evidence type="ECO:0000269" key="6">
    <source>
    </source>
</evidence>
<evidence type="ECO:0000269" key="7">
    <source>
    </source>
</evidence>
<evidence type="ECO:0000269" key="8">
    <source>
    </source>
</evidence>
<evidence type="ECO:0000269" key="9">
    <source>
    </source>
</evidence>
<evidence type="ECO:0000269" key="10">
    <source>
    </source>
</evidence>
<evidence type="ECO:0000269" key="11">
    <source>
    </source>
</evidence>
<evidence type="ECO:0000303" key="12">
    <source ref="4"/>
</evidence>
<evidence type="ECO:0000305" key="13"/>
<evidence type="ECO:0000305" key="14">
    <source>
    </source>
</evidence>
<evidence type="ECO:0000305" key="15">
    <source>
    </source>
</evidence>
<proteinExistence type="evidence at protein level"/>
<sequence>MMWESESDGGVGVGGGGGREYGDGVLSSNKHGGVKTDGFELRGQSWFVATDIPSDLLVKIGDMNFHLHKYPLLSRSGKMNRLIYESRDPDPTILILDDLPGGPEAFELASKFCYGVPVDLTATNISGLRCAAEYLEMTEDLEEGNLIFKTEAFLSYVVLSSWRDSILVLKSCEKLSPWAENLQIVRRCSESIAWKACSNPKGIRWAYTGKAPSPSTTNFAGSSPRWNESKDSSFYCSPSRNTNSQPVPPDWWFEDVSILRIDHFVRVITAIKVKGMRFELLGAVIMHYAGKWLPGLIKEGGVAIAPAMSSAIGGGLGLGGDEMSISCGSNSSGGSSGPDWKGGLHMVLSAGKTNGHQDSVACLAGLGISPKDQRMIVESLISIIPPQKDSVTCSFLLRLLRAANMLKVAPALITELEKRVGMQFEQATLQDLLIPGYNNKGETMYDVDLVQRLLEHFLVQEQTEGSSPSRMSPSPSQSMYADIPRGNNNNGGGGGGNNQNAKMRVARLVDSYLTEVARDRNLPLTKFQVLAEALPESARTCDDGLYRAIDSYLKAHPTLSEHERKRLCRVMDCQKLSMDACMHAAQNERLPLRVVVQVLFSEQVKISNALANTSLKESTTLGEAMGTYQPMIPNRKTLIEATPQSFQEGWAAAKKDINTLKFELETVKTKYVELQNEMEVMQRQFEKTGKVKNTPSSSAWTSGWKKLSKLTKMSGQESHDISSGGEQAGVDHPPPRKPRRWRNSIS</sequence>
<comment type="function">
    <text evidence="1 5 6 7 9 11">May act as a substrate-specific adapter of an E3 ubiquitin-protein ligase complex (CUL3-RBX1-BTB) which mediates the ubiquitination and subsequent proteasomal degradation of target proteins (By similarity). Signal transducer of the phototropic response and photo-induced movements. Involved in the phot1 pathway under low blue light (LBL) fluence rate and in the phot2 pathway under higher fluence rate of blue light (HBL). Necessary for root and hypocotyl phototropisms, but not for the regulation of stomata opening. Not involved in chloroplast accumulation and translocation.</text>
</comment>
<comment type="pathway">
    <text>Protein modification; protein ubiquitination.</text>
</comment>
<comment type="subunit">
    <text evidence="5 7 9 11">Interacts with PKS1, PKS2, RPT2, PHOT1 and PHOT2 (PubMed:10542152, PubMed:15031408, PubMed:16777956, PubMed:20071603). Subunit of a complex made of CAR6, PHOT1 and RPT3/NPH3 (PubMed:21367967).</text>
</comment>
<comment type="interaction">
    <interactant intactId="EBI-1553842">
        <id>Q9FMF5</id>
    </interactant>
    <interactant intactId="EBI-1553849">
        <id>O48963</id>
        <label>PHOT1</label>
    </interactant>
    <organismsDiffer>false</organismsDiffer>
    <experiments>3</experiments>
</comment>
<comment type="interaction">
    <interactant intactId="EBI-1553842">
        <id>Q9FMF5</id>
    </interactant>
    <interactant intactId="EBI-626200">
        <id>Q9SWI1</id>
        <label>PKS1</label>
    </interactant>
    <organismsDiffer>false</organismsDiffer>
    <experiments>2</experiments>
</comment>
<comment type="subcellular location">
    <subcellularLocation>
        <location evidence="5 9">Cell membrane</location>
        <topology evidence="5 9">Peripheral membrane protein</topology>
    </subcellularLocation>
</comment>
<comment type="alternative products">
    <event type="alternative splicing"/>
    <isoform>
        <id>Q9FMF5-1</id>
        <name>1</name>
        <sequence type="displayed"/>
    </isoform>
    <isoform>
        <id>Q9FMF5-2</id>
        <name>2</name>
        <sequence type="described" ref="VSP_041384 VSP_041385"/>
    </isoform>
</comment>
<comment type="tissue specificity">
    <text evidence="7">Expressed in hypocotyls, guard cells and mesophyll cells.</text>
</comment>
<comment type="induction">
    <text evidence="10">In the root, up-regulated by red light.</text>
</comment>
<comment type="domain">
    <text evidence="8">The BTB/POZ domain mediates the interaction with some component of ubiquitin ligase complexes.</text>
</comment>
<comment type="PTM">
    <text evidence="14 15">Phosphorylated in the dark.</text>
</comment>
<comment type="disruption phenotype">
    <text evidence="11">Impaired leaf flattening and slight epinasty when grown under blue light.</text>
</comment>
<comment type="miscellaneous">
    <molecule>Isoform 2</molecule>
    <text evidence="13">May be due to an intron retention.</text>
</comment>
<comment type="similarity">
    <text evidence="3">Belongs to the NPH3 family.</text>
</comment>
<comment type="sequence caution" evidence="13">
    <conflict type="erroneous gene model prediction">
        <sequence resource="EMBL-CDS" id="BAB09864"/>
    </conflict>
</comment>
<gene>
    <name type="primary">RPT3</name>
    <name type="synonym">JK218</name>
    <name type="synonym">NPH3</name>
    <name type="ordered locus">At5g64330</name>
    <name type="ORF">MSJ1.17</name>
</gene>